<dbReference type="EMBL" id="CU928145">
    <property type="protein sequence ID" value="CAV01704.1"/>
    <property type="molecule type" value="Genomic_DNA"/>
</dbReference>
<dbReference type="RefSeq" id="WP_001196062.1">
    <property type="nucleotide sequence ID" value="NZ_CP028304.1"/>
</dbReference>
<dbReference type="SMR" id="B7LCR4"/>
<dbReference type="GeneID" id="93777620"/>
<dbReference type="KEGG" id="eck:EC55989_4761"/>
<dbReference type="HOGENOM" id="CLU_078938_4_1_6"/>
<dbReference type="Proteomes" id="UP000000746">
    <property type="component" value="Chromosome"/>
</dbReference>
<dbReference type="GO" id="GO:1990904">
    <property type="term" value="C:ribonucleoprotein complex"/>
    <property type="evidence" value="ECO:0007669"/>
    <property type="project" value="UniProtKB-KW"/>
</dbReference>
<dbReference type="GO" id="GO:0005840">
    <property type="term" value="C:ribosome"/>
    <property type="evidence" value="ECO:0007669"/>
    <property type="project" value="UniProtKB-KW"/>
</dbReference>
<dbReference type="GO" id="GO:0019843">
    <property type="term" value="F:rRNA binding"/>
    <property type="evidence" value="ECO:0007669"/>
    <property type="project" value="UniProtKB-UniRule"/>
</dbReference>
<dbReference type="GO" id="GO:0003735">
    <property type="term" value="F:structural constituent of ribosome"/>
    <property type="evidence" value="ECO:0007669"/>
    <property type="project" value="InterPro"/>
</dbReference>
<dbReference type="GO" id="GO:0006412">
    <property type="term" value="P:translation"/>
    <property type="evidence" value="ECO:0007669"/>
    <property type="project" value="UniProtKB-UniRule"/>
</dbReference>
<dbReference type="FunFam" id="3.10.430.100:FF:000001">
    <property type="entry name" value="50S ribosomal protein L9"/>
    <property type="match status" value="1"/>
</dbReference>
<dbReference type="FunFam" id="3.40.5.10:FF:000001">
    <property type="entry name" value="50S ribosomal protein L9"/>
    <property type="match status" value="1"/>
</dbReference>
<dbReference type="Gene3D" id="3.10.430.100">
    <property type="entry name" value="Ribosomal protein L9, C-terminal domain"/>
    <property type="match status" value="1"/>
</dbReference>
<dbReference type="Gene3D" id="3.40.5.10">
    <property type="entry name" value="Ribosomal protein L9, N-terminal domain"/>
    <property type="match status" value="1"/>
</dbReference>
<dbReference type="HAMAP" id="MF_00503">
    <property type="entry name" value="Ribosomal_bL9"/>
    <property type="match status" value="1"/>
</dbReference>
<dbReference type="InterPro" id="IPR000244">
    <property type="entry name" value="Ribosomal_bL9"/>
</dbReference>
<dbReference type="InterPro" id="IPR009027">
    <property type="entry name" value="Ribosomal_bL9/RNase_H1_N"/>
</dbReference>
<dbReference type="InterPro" id="IPR020594">
    <property type="entry name" value="Ribosomal_bL9_bac/chp"/>
</dbReference>
<dbReference type="InterPro" id="IPR020069">
    <property type="entry name" value="Ribosomal_bL9_C"/>
</dbReference>
<dbReference type="InterPro" id="IPR036791">
    <property type="entry name" value="Ribosomal_bL9_C_sf"/>
</dbReference>
<dbReference type="InterPro" id="IPR020070">
    <property type="entry name" value="Ribosomal_bL9_N"/>
</dbReference>
<dbReference type="InterPro" id="IPR036935">
    <property type="entry name" value="Ribosomal_bL9_N_sf"/>
</dbReference>
<dbReference type="NCBIfam" id="TIGR00158">
    <property type="entry name" value="L9"/>
    <property type="match status" value="1"/>
</dbReference>
<dbReference type="PANTHER" id="PTHR21368">
    <property type="entry name" value="50S RIBOSOMAL PROTEIN L9"/>
    <property type="match status" value="1"/>
</dbReference>
<dbReference type="Pfam" id="PF03948">
    <property type="entry name" value="Ribosomal_L9_C"/>
    <property type="match status" value="1"/>
</dbReference>
<dbReference type="Pfam" id="PF01281">
    <property type="entry name" value="Ribosomal_L9_N"/>
    <property type="match status" value="1"/>
</dbReference>
<dbReference type="SUPFAM" id="SSF55658">
    <property type="entry name" value="L9 N-domain-like"/>
    <property type="match status" value="1"/>
</dbReference>
<dbReference type="SUPFAM" id="SSF55653">
    <property type="entry name" value="Ribosomal protein L9 C-domain"/>
    <property type="match status" value="1"/>
</dbReference>
<dbReference type="PROSITE" id="PS00651">
    <property type="entry name" value="RIBOSOMAL_L9"/>
    <property type="match status" value="1"/>
</dbReference>
<reference key="1">
    <citation type="journal article" date="2009" name="PLoS Genet.">
        <title>Organised genome dynamics in the Escherichia coli species results in highly diverse adaptive paths.</title>
        <authorList>
            <person name="Touchon M."/>
            <person name="Hoede C."/>
            <person name="Tenaillon O."/>
            <person name="Barbe V."/>
            <person name="Baeriswyl S."/>
            <person name="Bidet P."/>
            <person name="Bingen E."/>
            <person name="Bonacorsi S."/>
            <person name="Bouchier C."/>
            <person name="Bouvet O."/>
            <person name="Calteau A."/>
            <person name="Chiapello H."/>
            <person name="Clermont O."/>
            <person name="Cruveiller S."/>
            <person name="Danchin A."/>
            <person name="Diard M."/>
            <person name="Dossat C."/>
            <person name="Karoui M.E."/>
            <person name="Frapy E."/>
            <person name="Garry L."/>
            <person name="Ghigo J.M."/>
            <person name="Gilles A.M."/>
            <person name="Johnson J."/>
            <person name="Le Bouguenec C."/>
            <person name="Lescat M."/>
            <person name="Mangenot S."/>
            <person name="Martinez-Jehanne V."/>
            <person name="Matic I."/>
            <person name="Nassif X."/>
            <person name="Oztas S."/>
            <person name="Petit M.A."/>
            <person name="Pichon C."/>
            <person name="Rouy Z."/>
            <person name="Ruf C.S."/>
            <person name="Schneider D."/>
            <person name="Tourret J."/>
            <person name="Vacherie B."/>
            <person name="Vallenet D."/>
            <person name="Medigue C."/>
            <person name="Rocha E.P.C."/>
            <person name="Denamur E."/>
        </authorList>
    </citation>
    <scope>NUCLEOTIDE SEQUENCE [LARGE SCALE GENOMIC DNA]</scope>
    <source>
        <strain>55989 / EAEC</strain>
    </source>
</reference>
<protein>
    <recommendedName>
        <fullName evidence="1">Large ribosomal subunit protein bL9</fullName>
    </recommendedName>
    <alternativeName>
        <fullName evidence="2">50S ribosomal protein L9</fullName>
    </alternativeName>
</protein>
<proteinExistence type="inferred from homology"/>
<organism>
    <name type="scientific">Escherichia coli (strain 55989 / EAEC)</name>
    <dbReference type="NCBI Taxonomy" id="585055"/>
    <lineage>
        <taxon>Bacteria</taxon>
        <taxon>Pseudomonadati</taxon>
        <taxon>Pseudomonadota</taxon>
        <taxon>Gammaproteobacteria</taxon>
        <taxon>Enterobacterales</taxon>
        <taxon>Enterobacteriaceae</taxon>
        <taxon>Escherichia</taxon>
    </lineage>
</organism>
<comment type="function">
    <text evidence="1">Binds to the 23S rRNA.</text>
</comment>
<comment type="similarity">
    <text evidence="1">Belongs to the bacterial ribosomal protein bL9 family.</text>
</comment>
<evidence type="ECO:0000255" key="1">
    <source>
        <dbReference type="HAMAP-Rule" id="MF_00503"/>
    </source>
</evidence>
<evidence type="ECO:0000305" key="2"/>
<keyword id="KW-0007">Acetylation</keyword>
<keyword id="KW-1185">Reference proteome</keyword>
<keyword id="KW-0687">Ribonucleoprotein</keyword>
<keyword id="KW-0689">Ribosomal protein</keyword>
<keyword id="KW-0694">RNA-binding</keyword>
<keyword id="KW-0699">rRNA-binding</keyword>
<name>RL9_ECO55</name>
<sequence length="149" mass="15769">MQVILLDKVANLGSLGDQVNVKAGYARNFLVPQGKAVPATKKNIEFFEARRAELEAKLAEVLAAANARAEKINALETVTIASKAGDEGKLFGSIGTRDIADAVTAAGVEVAKSEVRLPNGVLRTTGEHEVSFQVHSEVFAKVIVNVVAE</sequence>
<gene>
    <name evidence="1" type="primary">rplI</name>
    <name type="ordered locus">EC55989_4761</name>
</gene>
<feature type="chain" id="PRO_1000196243" description="Large ribosomal subunit protein bL9">
    <location>
        <begin position="1"/>
        <end position="149"/>
    </location>
</feature>
<feature type="modified residue" description="N6-acetyllysine" evidence="1">
    <location>
        <position position="89"/>
    </location>
</feature>
<accession>B7LCR4</accession>